<name>OR5K4_HUMAN</name>
<dbReference type="EMBL" id="AC108730">
    <property type="status" value="NOT_ANNOTATED_CDS"/>
    <property type="molecule type" value="Genomic_DNA"/>
</dbReference>
<dbReference type="EMBL" id="CH471052">
    <property type="protein sequence ID" value="EAW79864.1"/>
    <property type="molecule type" value="Genomic_DNA"/>
</dbReference>
<dbReference type="CCDS" id="CCDS33802.1"/>
<dbReference type="RefSeq" id="NP_001005517.1">
    <property type="nucleotide sequence ID" value="NM_001005517.1"/>
</dbReference>
<dbReference type="SMR" id="A6NMS3"/>
<dbReference type="FunCoup" id="A6NMS3">
    <property type="interactions" value="416"/>
</dbReference>
<dbReference type="STRING" id="9606.ENSP00000347003"/>
<dbReference type="GlyCosmos" id="A6NMS3">
    <property type="glycosylation" value="1 site, No reported glycans"/>
</dbReference>
<dbReference type="GlyGen" id="A6NMS3">
    <property type="glycosylation" value="2 sites"/>
</dbReference>
<dbReference type="BioMuta" id="OR5K4"/>
<dbReference type="MassIVE" id="A6NMS3"/>
<dbReference type="PaxDb" id="9606-ENSP00000347003"/>
<dbReference type="Antibodypedia" id="71690">
    <property type="antibodies" value="25 antibodies from 9 providers"/>
</dbReference>
<dbReference type="DNASU" id="403278"/>
<dbReference type="Ensembl" id="ENST00000354924.2">
    <property type="protein sequence ID" value="ENSP00000347003.2"/>
    <property type="gene ID" value="ENSG00000196098.2"/>
</dbReference>
<dbReference type="GeneID" id="403278"/>
<dbReference type="KEGG" id="hsa:403278"/>
<dbReference type="MANE-Select" id="ENST00000354924.2">
    <property type="protein sequence ID" value="ENSP00000347003.2"/>
    <property type="RefSeq nucleotide sequence ID" value="NM_001005517.1"/>
    <property type="RefSeq protein sequence ID" value="NP_001005517.1"/>
</dbReference>
<dbReference type="UCSC" id="uc011bgv.2">
    <property type="organism name" value="human"/>
</dbReference>
<dbReference type="AGR" id="HGNC:31291"/>
<dbReference type="CTD" id="403278"/>
<dbReference type="DisGeNET" id="403278"/>
<dbReference type="GeneCards" id="OR5K4"/>
<dbReference type="HGNC" id="HGNC:31291">
    <property type="gene designation" value="OR5K4"/>
</dbReference>
<dbReference type="HPA" id="ENSG00000196098">
    <property type="expression patterns" value="Not detected"/>
</dbReference>
<dbReference type="neXtProt" id="NX_A6NMS3"/>
<dbReference type="PharmGKB" id="PA134945625"/>
<dbReference type="VEuPathDB" id="HostDB:ENSG00000196098"/>
<dbReference type="eggNOG" id="KOG3656">
    <property type="taxonomic scope" value="Eukaryota"/>
</dbReference>
<dbReference type="GeneTree" id="ENSGT01120000271834"/>
<dbReference type="HOGENOM" id="CLU_012526_8_1_1"/>
<dbReference type="InParanoid" id="A6NMS3"/>
<dbReference type="OMA" id="IMRNYNI"/>
<dbReference type="OrthoDB" id="9444602at2759"/>
<dbReference type="PAN-GO" id="A6NMS3">
    <property type="GO annotations" value="2 GO annotations based on evolutionary models"/>
</dbReference>
<dbReference type="PhylomeDB" id="A6NMS3"/>
<dbReference type="TreeFam" id="TF352737"/>
<dbReference type="PathwayCommons" id="A6NMS3"/>
<dbReference type="Reactome" id="R-HSA-9752946">
    <property type="pathway name" value="Expression and translocation of olfactory receptors"/>
</dbReference>
<dbReference type="SignaLink" id="A6NMS3"/>
<dbReference type="BioGRID-ORCS" id="403278">
    <property type="hits" value="9 hits in 694 CRISPR screens"/>
</dbReference>
<dbReference type="GenomeRNAi" id="403278"/>
<dbReference type="Pharos" id="A6NMS3">
    <property type="development level" value="Tdark"/>
</dbReference>
<dbReference type="PRO" id="PR:A6NMS3"/>
<dbReference type="Proteomes" id="UP000005640">
    <property type="component" value="Chromosome 3"/>
</dbReference>
<dbReference type="RNAct" id="A6NMS3">
    <property type="molecule type" value="protein"/>
</dbReference>
<dbReference type="Bgee" id="ENSG00000196098">
    <property type="expression patterns" value="Expressed in primordial germ cell in gonad and 3 other cell types or tissues"/>
</dbReference>
<dbReference type="GO" id="GO:0005886">
    <property type="term" value="C:plasma membrane"/>
    <property type="evidence" value="ECO:0007669"/>
    <property type="project" value="UniProtKB-SubCell"/>
</dbReference>
<dbReference type="GO" id="GO:0004930">
    <property type="term" value="F:G protein-coupled receptor activity"/>
    <property type="evidence" value="ECO:0007669"/>
    <property type="project" value="UniProtKB-KW"/>
</dbReference>
<dbReference type="GO" id="GO:0005549">
    <property type="term" value="F:odorant binding"/>
    <property type="evidence" value="ECO:0000318"/>
    <property type="project" value="GO_Central"/>
</dbReference>
<dbReference type="GO" id="GO:0004984">
    <property type="term" value="F:olfactory receptor activity"/>
    <property type="evidence" value="ECO:0000318"/>
    <property type="project" value="GO_Central"/>
</dbReference>
<dbReference type="FunFam" id="1.20.1070.10:FF:000004">
    <property type="entry name" value="Olfactory receptor"/>
    <property type="match status" value="1"/>
</dbReference>
<dbReference type="Gene3D" id="1.20.1070.10">
    <property type="entry name" value="Rhodopsin 7-helix transmembrane proteins"/>
    <property type="match status" value="1"/>
</dbReference>
<dbReference type="InterPro" id="IPR000276">
    <property type="entry name" value="GPCR_Rhodpsn"/>
</dbReference>
<dbReference type="InterPro" id="IPR017452">
    <property type="entry name" value="GPCR_Rhodpsn_7TM"/>
</dbReference>
<dbReference type="InterPro" id="IPR000725">
    <property type="entry name" value="Olfact_rcpt"/>
</dbReference>
<dbReference type="PANTHER" id="PTHR48018">
    <property type="entry name" value="OLFACTORY RECEPTOR"/>
    <property type="match status" value="1"/>
</dbReference>
<dbReference type="Pfam" id="PF13853">
    <property type="entry name" value="7tm_4"/>
    <property type="match status" value="1"/>
</dbReference>
<dbReference type="PRINTS" id="PR00237">
    <property type="entry name" value="GPCRRHODOPSN"/>
</dbReference>
<dbReference type="PRINTS" id="PR00245">
    <property type="entry name" value="OLFACTORYR"/>
</dbReference>
<dbReference type="SUPFAM" id="SSF81321">
    <property type="entry name" value="Family A G protein-coupled receptor-like"/>
    <property type="match status" value="1"/>
</dbReference>
<dbReference type="PROSITE" id="PS00237">
    <property type="entry name" value="G_PROTEIN_RECEP_F1_1"/>
    <property type="match status" value="1"/>
</dbReference>
<dbReference type="PROSITE" id="PS50262">
    <property type="entry name" value="G_PROTEIN_RECEP_F1_2"/>
    <property type="match status" value="1"/>
</dbReference>
<keyword id="KW-1003">Cell membrane</keyword>
<keyword id="KW-1015">Disulfide bond</keyword>
<keyword id="KW-0297">G-protein coupled receptor</keyword>
<keyword id="KW-0325">Glycoprotein</keyword>
<keyword id="KW-0472">Membrane</keyword>
<keyword id="KW-0552">Olfaction</keyword>
<keyword id="KW-0675">Receptor</keyword>
<keyword id="KW-1185">Reference proteome</keyword>
<keyword id="KW-0716">Sensory transduction</keyword>
<keyword id="KW-0807">Transducer</keyword>
<keyword id="KW-0812">Transmembrane</keyword>
<keyword id="KW-1133">Transmembrane helix</keyword>
<protein>
    <recommendedName>
        <fullName>Olfactory receptor 5K4</fullName>
    </recommendedName>
</protein>
<gene>
    <name type="primary">OR5K4</name>
</gene>
<feature type="chain" id="PRO_0000312177" description="Olfactory receptor 5K4">
    <location>
        <begin position="1"/>
        <end position="321"/>
    </location>
</feature>
<feature type="topological domain" description="Extracellular" evidence="1">
    <location>
        <begin position="1"/>
        <end position="25"/>
    </location>
</feature>
<feature type="transmembrane region" description="Helical; Name=1" evidence="1">
    <location>
        <begin position="26"/>
        <end position="46"/>
    </location>
</feature>
<feature type="topological domain" description="Cytoplasmic" evidence="1">
    <location>
        <begin position="47"/>
        <end position="54"/>
    </location>
</feature>
<feature type="transmembrane region" description="Helical; Name=2" evidence="1">
    <location>
        <begin position="55"/>
        <end position="75"/>
    </location>
</feature>
<feature type="topological domain" description="Extracellular" evidence="1">
    <location>
        <begin position="76"/>
        <end position="97"/>
    </location>
</feature>
<feature type="transmembrane region" description="Helical; Name=3" evidence="1">
    <location>
        <begin position="98"/>
        <end position="118"/>
    </location>
</feature>
<feature type="topological domain" description="Cytoplasmic" evidence="1">
    <location>
        <begin position="119"/>
        <end position="139"/>
    </location>
</feature>
<feature type="transmembrane region" description="Helical; Name=4" evidence="1">
    <location>
        <begin position="140"/>
        <end position="160"/>
    </location>
</feature>
<feature type="topological domain" description="Extracellular" evidence="1">
    <location>
        <begin position="161"/>
        <end position="205"/>
    </location>
</feature>
<feature type="transmembrane region" description="Helical; Name=5" evidence="1">
    <location>
        <begin position="206"/>
        <end position="226"/>
    </location>
</feature>
<feature type="topological domain" description="Cytoplasmic" evidence="1">
    <location>
        <begin position="227"/>
        <end position="240"/>
    </location>
</feature>
<feature type="transmembrane region" description="Helical; Name=6" evidence="1">
    <location>
        <begin position="241"/>
        <end position="261"/>
    </location>
</feature>
<feature type="topological domain" description="Extracellular" evidence="1">
    <location>
        <begin position="262"/>
        <end position="268"/>
    </location>
</feature>
<feature type="transmembrane region" description="Helical; Name=7" evidence="1">
    <location>
        <begin position="269"/>
        <end position="289"/>
    </location>
</feature>
<feature type="topological domain" description="Cytoplasmic" evidence="1">
    <location>
        <begin position="290"/>
        <end position="321"/>
    </location>
</feature>
<feature type="glycosylation site" description="N-linked (GlcNAc...) asparagine" evidence="1">
    <location>
        <position position="5"/>
    </location>
</feature>
<feature type="disulfide bond" evidence="2">
    <location>
        <begin position="97"/>
        <end position="179"/>
    </location>
</feature>
<feature type="sequence variant" id="VAR_037448" description="In dbSNP:rs9822460.">
    <original>I</original>
    <variation>V</variation>
    <location>
        <position position="206"/>
    </location>
</feature>
<proteinExistence type="inferred from homology"/>
<evidence type="ECO:0000255" key="1"/>
<evidence type="ECO:0000255" key="2">
    <source>
        <dbReference type="PROSITE-ProRule" id="PRU00521"/>
    </source>
</evidence>
<evidence type="ECO:0000305" key="3"/>
<comment type="function">
    <text evidence="3">Odorant receptor.</text>
</comment>
<comment type="subcellular location">
    <subcellularLocation>
        <location>Cell membrane</location>
        <topology>Multi-pass membrane protein</topology>
    </subcellularLocation>
</comment>
<comment type="similarity">
    <text evidence="2">Belongs to the G-protein coupled receptor 1 family.</text>
</comment>
<comment type="online information" name="Human Olfactory Receptor Data Exploratorium (HORDE)">
    <link uri="http://genome.weizmann.ac.il/horde/card/index/symbol:OR5K4"/>
</comment>
<accession>A6NMS3</accession>
<organism>
    <name type="scientific">Homo sapiens</name>
    <name type="common">Human</name>
    <dbReference type="NCBI Taxonomy" id="9606"/>
    <lineage>
        <taxon>Eukaryota</taxon>
        <taxon>Metazoa</taxon>
        <taxon>Chordata</taxon>
        <taxon>Craniata</taxon>
        <taxon>Vertebrata</taxon>
        <taxon>Euteleostomi</taxon>
        <taxon>Mammalia</taxon>
        <taxon>Eutheria</taxon>
        <taxon>Euarchontoglires</taxon>
        <taxon>Primates</taxon>
        <taxon>Haplorrhini</taxon>
        <taxon>Catarrhini</taxon>
        <taxon>Hominidae</taxon>
        <taxon>Homo</taxon>
    </lineage>
</organism>
<sequence length="321" mass="36711">MARENHSLAAEFILIGFTNYPELKTLLFVVFSAIYLVTMVGNLGLVALIYVERRLLTPMYIFLGNLALMDSCCSCAVTPKMLENFFSEDRIISLYECMAQFYFLCLAETTDCFLLATMAYDRYVAICHPLQYHTMMSKTLCIRMTTGAFKAGNLHSMIHVGLLLRLTFCRSNKIHHFFCDILPLYRLSCTDPSINELMIYIFSIPIQIFTIATVLISYLCILLTVFKMKSKEGRGKAFSTCASHFLSVSIFYICLLMYIGPSEEGDKDTPVAIFYAIVIPLLNPFIYSLRNKEVINVLKKIMRNYNILKQTCSIANLFLIY</sequence>
<reference key="1">
    <citation type="journal article" date="2006" name="Nature">
        <title>The DNA sequence, annotation and analysis of human chromosome 3.</title>
        <authorList>
            <person name="Muzny D.M."/>
            <person name="Scherer S.E."/>
            <person name="Kaul R."/>
            <person name="Wang J."/>
            <person name="Yu J."/>
            <person name="Sudbrak R."/>
            <person name="Buhay C.J."/>
            <person name="Chen R."/>
            <person name="Cree A."/>
            <person name="Ding Y."/>
            <person name="Dugan-Rocha S."/>
            <person name="Gill R."/>
            <person name="Gunaratne P."/>
            <person name="Harris R.A."/>
            <person name="Hawes A.C."/>
            <person name="Hernandez J."/>
            <person name="Hodgson A.V."/>
            <person name="Hume J."/>
            <person name="Jackson A."/>
            <person name="Khan Z.M."/>
            <person name="Kovar-Smith C."/>
            <person name="Lewis L.R."/>
            <person name="Lozado R.J."/>
            <person name="Metzker M.L."/>
            <person name="Milosavljevic A."/>
            <person name="Miner G.R."/>
            <person name="Morgan M.B."/>
            <person name="Nazareth L.V."/>
            <person name="Scott G."/>
            <person name="Sodergren E."/>
            <person name="Song X.-Z."/>
            <person name="Steffen D."/>
            <person name="Wei S."/>
            <person name="Wheeler D.A."/>
            <person name="Wright M.W."/>
            <person name="Worley K.C."/>
            <person name="Yuan Y."/>
            <person name="Zhang Z."/>
            <person name="Adams C.Q."/>
            <person name="Ansari-Lari M.A."/>
            <person name="Ayele M."/>
            <person name="Brown M.J."/>
            <person name="Chen G."/>
            <person name="Chen Z."/>
            <person name="Clendenning J."/>
            <person name="Clerc-Blankenburg K.P."/>
            <person name="Chen R."/>
            <person name="Chen Z."/>
            <person name="Davis C."/>
            <person name="Delgado O."/>
            <person name="Dinh H.H."/>
            <person name="Dong W."/>
            <person name="Draper H."/>
            <person name="Ernst S."/>
            <person name="Fu G."/>
            <person name="Gonzalez-Garay M.L."/>
            <person name="Garcia D.K."/>
            <person name="Gillett W."/>
            <person name="Gu J."/>
            <person name="Hao B."/>
            <person name="Haugen E."/>
            <person name="Havlak P."/>
            <person name="He X."/>
            <person name="Hennig S."/>
            <person name="Hu S."/>
            <person name="Huang W."/>
            <person name="Jackson L.R."/>
            <person name="Jacob L.S."/>
            <person name="Kelly S.H."/>
            <person name="Kube M."/>
            <person name="Levy R."/>
            <person name="Li Z."/>
            <person name="Liu B."/>
            <person name="Liu J."/>
            <person name="Liu W."/>
            <person name="Lu J."/>
            <person name="Maheshwari M."/>
            <person name="Nguyen B.-V."/>
            <person name="Okwuonu G.O."/>
            <person name="Palmeiri A."/>
            <person name="Pasternak S."/>
            <person name="Perez L.M."/>
            <person name="Phelps K.A."/>
            <person name="Plopper F.J."/>
            <person name="Qiang B."/>
            <person name="Raymond C."/>
            <person name="Rodriguez R."/>
            <person name="Saenphimmachak C."/>
            <person name="Santibanez J."/>
            <person name="Shen H."/>
            <person name="Shen Y."/>
            <person name="Subramanian S."/>
            <person name="Tabor P.E."/>
            <person name="Verduzco D."/>
            <person name="Waldron L."/>
            <person name="Wang J."/>
            <person name="Wang J."/>
            <person name="Wang Q."/>
            <person name="Williams G.A."/>
            <person name="Wong G.K.-S."/>
            <person name="Yao Z."/>
            <person name="Zhang J."/>
            <person name="Zhang X."/>
            <person name="Zhao G."/>
            <person name="Zhou J."/>
            <person name="Zhou Y."/>
            <person name="Nelson D."/>
            <person name="Lehrach H."/>
            <person name="Reinhardt R."/>
            <person name="Naylor S.L."/>
            <person name="Yang H."/>
            <person name="Olson M."/>
            <person name="Weinstock G."/>
            <person name="Gibbs R.A."/>
        </authorList>
    </citation>
    <scope>NUCLEOTIDE SEQUENCE [LARGE SCALE GENOMIC DNA]</scope>
</reference>
<reference key="2">
    <citation type="submission" date="2005-09" db="EMBL/GenBank/DDBJ databases">
        <authorList>
            <person name="Mural R.J."/>
            <person name="Istrail S."/>
            <person name="Sutton G.G."/>
            <person name="Florea L."/>
            <person name="Halpern A.L."/>
            <person name="Mobarry C.M."/>
            <person name="Lippert R."/>
            <person name="Walenz B."/>
            <person name="Shatkay H."/>
            <person name="Dew I."/>
            <person name="Miller J.R."/>
            <person name="Flanigan M.J."/>
            <person name="Edwards N.J."/>
            <person name="Bolanos R."/>
            <person name="Fasulo D."/>
            <person name="Halldorsson B.V."/>
            <person name="Hannenhalli S."/>
            <person name="Turner R."/>
            <person name="Yooseph S."/>
            <person name="Lu F."/>
            <person name="Nusskern D.R."/>
            <person name="Shue B.C."/>
            <person name="Zheng X.H."/>
            <person name="Zhong F."/>
            <person name="Delcher A.L."/>
            <person name="Huson D.H."/>
            <person name="Kravitz S.A."/>
            <person name="Mouchard L."/>
            <person name="Reinert K."/>
            <person name="Remington K.A."/>
            <person name="Clark A.G."/>
            <person name="Waterman M.S."/>
            <person name="Eichler E.E."/>
            <person name="Adams M.D."/>
            <person name="Hunkapiller M.W."/>
            <person name="Myers E.W."/>
            <person name="Venter J.C."/>
        </authorList>
    </citation>
    <scope>NUCLEOTIDE SEQUENCE [LARGE SCALE GENOMIC DNA]</scope>
</reference>